<reference key="1">
    <citation type="journal article" date="2008" name="J. Bacteriol.">
        <title>Insights into plant cell wall degradation from the genome sequence of the soil bacterium Cellvibrio japonicus.</title>
        <authorList>
            <person name="DeBoy R.T."/>
            <person name="Mongodin E.F."/>
            <person name="Fouts D.E."/>
            <person name="Tailford L.E."/>
            <person name="Khouri H."/>
            <person name="Emerson J.B."/>
            <person name="Mohamoud Y."/>
            <person name="Watkins K."/>
            <person name="Henrissat B."/>
            <person name="Gilbert H.J."/>
            <person name="Nelson K.E."/>
        </authorList>
    </citation>
    <scope>NUCLEOTIDE SEQUENCE [LARGE SCALE GENOMIC DNA]</scope>
    <source>
        <strain>Ueda107</strain>
    </source>
</reference>
<protein>
    <recommendedName>
        <fullName evidence="1">DNA repair protein RecO</fullName>
    </recommendedName>
    <alternativeName>
        <fullName evidence="1">Recombination protein O</fullName>
    </alternativeName>
</protein>
<accession>B3PL65</accession>
<name>RECO_CELJU</name>
<organism>
    <name type="scientific">Cellvibrio japonicus (strain Ueda107)</name>
    <name type="common">Pseudomonas fluorescens subsp. cellulosa</name>
    <dbReference type="NCBI Taxonomy" id="498211"/>
    <lineage>
        <taxon>Bacteria</taxon>
        <taxon>Pseudomonadati</taxon>
        <taxon>Pseudomonadota</taxon>
        <taxon>Gammaproteobacteria</taxon>
        <taxon>Cellvibrionales</taxon>
        <taxon>Cellvibrionaceae</taxon>
        <taxon>Cellvibrio</taxon>
    </lineage>
</organism>
<dbReference type="EMBL" id="CP000934">
    <property type="protein sequence ID" value="ACE84292.1"/>
    <property type="molecule type" value="Genomic_DNA"/>
</dbReference>
<dbReference type="RefSeq" id="WP_012488175.1">
    <property type="nucleotide sequence ID" value="NC_010995.1"/>
</dbReference>
<dbReference type="SMR" id="B3PL65"/>
<dbReference type="STRING" id="498211.CJA_2578"/>
<dbReference type="KEGG" id="cja:CJA_2578"/>
<dbReference type="eggNOG" id="COG1381">
    <property type="taxonomic scope" value="Bacteria"/>
</dbReference>
<dbReference type="HOGENOM" id="CLU_066645_1_0_6"/>
<dbReference type="OrthoDB" id="9804792at2"/>
<dbReference type="Proteomes" id="UP000001036">
    <property type="component" value="Chromosome"/>
</dbReference>
<dbReference type="GO" id="GO:0043590">
    <property type="term" value="C:bacterial nucleoid"/>
    <property type="evidence" value="ECO:0007669"/>
    <property type="project" value="TreeGrafter"/>
</dbReference>
<dbReference type="GO" id="GO:0006310">
    <property type="term" value="P:DNA recombination"/>
    <property type="evidence" value="ECO:0007669"/>
    <property type="project" value="UniProtKB-UniRule"/>
</dbReference>
<dbReference type="GO" id="GO:0006302">
    <property type="term" value="P:double-strand break repair"/>
    <property type="evidence" value="ECO:0007669"/>
    <property type="project" value="TreeGrafter"/>
</dbReference>
<dbReference type="Gene3D" id="2.40.50.140">
    <property type="entry name" value="Nucleic acid-binding proteins"/>
    <property type="match status" value="1"/>
</dbReference>
<dbReference type="Gene3D" id="1.20.1440.120">
    <property type="entry name" value="Recombination protein O, C-terminal domain"/>
    <property type="match status" value="1"/>
</dbReference>
<dbReference type="HAMAP" id="MF_00201">
    <property type="entry name" value="RecO"/>
    <property type="match status" value="1"/>
</dbReference>
<dbReference type="InterPro" id="IPR037278">
    <property type="entry name" value="ARFGAP/RecO"/>
</dbReference>
<dbReference type="InterPro" id="IPR022572">
    <property type="entry name" value="DNA_rep/recomb_RecO_N"/>
</dbReference>
<dbReference type="InterPro" id="IPR012340">
    <property type="entry name" value="NA-bd_OB-fold"/>
</dbReference>
<dbReference type="InterPro" id="IPR003717">
    <property type="entry name" value="RecO"/>
</dbReference>
<dbReference type="InterPro" id="IPR042242">
    <property type="entry name" value="RecO_C"/>
</dbReference>
<dbReference type="NCBIfam" id="TIGR00613">
    <property type="entry name" value="reco"/>
    <property type="match status" value="1"/>
</dbReference>
<dbReference type="PANTHER" id="PTHR33991">
    <property type="entry name" value="DNA REPAIR PROTEIN RECO"/>
    <property type="match status" value="1"/>
</dbReference>
<dbReference type="PANTHER" id="PTHR33991:SF1">
    <property type="entry name" value="DNA REPAIR PROTEIN RECO"/>
    <property type="match status" value="1"/>
</dbReference>
<dbReference type="Pfam" id="PF02565">
    <property type="entry name" value="RecO_C"/>
    <property type="match status" value="1"/>
</dbReference>
<dbReference type="Pfam" id="PF11967">
    <property type="entry name" value="RecO_N"/>
    <property type="match status" value="1"/>
</dbReference>
<dbReference type="SUPFAM" id="SSF57863">
    <property type="entry name" value="ArfGap/RecO-like zinc finger"/>
    <property type="match status" value="1"/>
</dbReference>
<dbReference type="SUPFAM" id="SSF50249">
    <property type="entry name" value="Nucleic acid-binding proteins"/>
    <property type="match status" value="1"/>
</dbReference>
<evidence type="ECO:0000255" key="1">
    <source>
        <dbReference type="HAMAP-Rule" id="MF_00201"/>
    </source>
</evidence>
<sequence length="236" mass="27061">MRVDLQPAYILHARPYRDTSLLLDLLTPVYGRITAVARGVRQSKGHKRQLLNPFHRLLVNWQGKSELKLITGVETDHHYLQLQGNALYSGFYLNELLVRLLPEQDVITGLFERYEWTLDALHRGEPLEPLLREFEFMLLQGLGYALDFLHDCHSQQPIQSGYFYLCDIHQGFYSVPADSDPRFWIAGAHLLAIAAGDYSAADTRRVAKQLARLLFKPLLGKRPLKSRELFTPGSPH</sequence>
<keyword id="KW-0227">DNA damage</keyword>
<keyword id="KW-0233">DNA recombination</keyword>
<keyword id="KW-0234">DNA repair</keyword>
<keyword id="KW-1185">Reference proteome</keyword>
<feature type="chain" id="PRO_1000099367" description="DNA repair protein RecO">
    <location>
        <begin position="1"/>
        <end position="236"/>
    </location>
</feature>
<gene>
    <name evidence="1" type="primary">recO</name>
    <name type="ordered locus">CJA_2578</name>
</gene>
<proteinExistence type="inferred from homology"/>
<comment type="function">
    <text evidence="1">Involved in DNA repair and RecF pathway recombination.</text>
</comment>
<comment type="similarity">
    <text evidence="1">Belongs to the RecO family.</text>
</comment>